<dbReference type="EC" id="3.4.11.9"/>
<dbReference type="EMBL" id="KN305539">
    <property type="protein sequence ID" value="EEH23295.2"/>
    <property type="molecule type" value="Genomic_DNA"/>
</dbReference>
<dbReference type="SMR" id="C0SCV1"/>
<dbReference type="VEuPathDB" id="FungiDB:PABG_05506"/>
<dbReference type="HOGENOM" id="CLU_011781_2_3_1"/>
<dbReference type="OrthoDB" id="2480at33183"/>
<dbReference type="GO" id="GO:0005737">
    <property type="term" value="C:cytoplasm"/>
    <property type="evidence" value="ECO:0007669"/>
    <property type="project" value="UniProtKB-ARBA"/>
</dbReference>
<dbReference type="GO" id="GO:0046872">
    <property type="term" value="F:metal ion binding"/>
    <property type="evidence" value="ECO:0007669"/>
    <property type="project" value="UniProtKB-KW"/>
</dbReference>
<dbReference type="GO" id="GO:0070006">
    <property type="term" value="F:metalloaminopeptidase activity"/>
    <property type="evidence" value="ECO:0007669"/>
    <property type="project" value="InterPro"/>
</dbReference>
<dbReference type="GO" id="GO:0006508">
    <property type="term" value="P:proteolysis"/>
    <property type="evidence" value="ECO:0007669"/>
    <property type="project" value="UniProtKB-KW"/>
</dbReference>
<dbReference type="CDD" id="cd01085">
    <property type="entry name" value="APP"/>
    <property type="match status" value="1"/>
</dbReference>
<dbReference type="FunFam" id="3.40.350.10:FF:000010">
    <property type="entry name" value="Probable Xaa-Pro aminopeptidase P"/>
    <property type="match status" value="1"/>
</dbReference>
<dbReference type="FunFam" id="3.90.230.10:FF:000007">
    <property type="entry name" value="Xaa-Pro aminopeptidase P"/>
    <property type="match status" value="1"/>
</dbReference>
<dbReference type="FunFam" id="3.40.350.10:FF:000003">
    <property type="entry name" value="Xaa-pro aminopeptidase P"/>
    <property type="match status" value="1"/>
</dbReference>
<dbReference type="Gene3D" id="3.90.230.10">
    <property type="entry name" value="Creatinase/methionine aminopeptidase superfamily"/>
    <property type="match status" value="1"/>
</dbReference>
<dbReference type="Gene3D" id="3.40.350.10">
    <property type="entry name" value="Creatinase/prolidase N-terminal domain"/>
    <property type="match status" value="2"/>
</dbReference>
<dbReference type="InterPro" id="IPR029149">
    <property type="entry name" value="Creatin/AminoP/Spt16_N"/>
</dbReference>
<dbReference type="InterPro" id="IPR036005">
    <property type="entry name" value="Creatinase/aminopeptidase-like"/>
</dbReference>
<dbReference type="InterPro" id="IPR000587">
    <property type="entry name" value="Creatinase_N"/>
</dbReference>
<dbReference type="InterPro" id="IPR000994">
    <property type="entry name" value="Pept_M24"/>
</dbReference>
<dbReference type="InterPro" id="IPR033740">
    <property type="entry name" value="Pept_M24B"/>
</dbReference>
<dbReference type="InterPro" id="IPR032416">
    <property type="entry name" value="Peptidase_M24_C"/>
</dbReference>
<dbReference type="InterPro" id="IPR001131">
    <property type="entry name" value="Peptidase_M24B_aminopep-P_CS"/>
</dbReference>
<dbReference type="InterPro" id="IPR050422">
    <property type="entry name" value="X-Pro_aminopeptidase_P"/>
</dbReference>
<dbReference type="PANTHER" id="PTHR43763">
    <property type="entry name" value="XAA-PRO AMINOPEPTIDASE 1"/>
    <property type="match status" value="1"/>
</dbReference>
<dbReference type="PANTHER" id="PTHR43763:SF6">
    <property type="entry name" value="XAA-PRO AMINOPEPTIDASE 1"/>
    <property type="match status" value="1"/>
</dbReference>
<dbReference type="Pfam" id="PF01321">
    <property type="entry name" value="Creatinase_N"/>
    <property type="match status" value="1"/>
</dbReference>
<dbReference type="Pfam" id="PF16189">
    <property type="entry name" value="Creatinase_N_2"/>
    <property type="match status" value="1"/>
</dbReference>
<dbReference type="Pfam" id="PF00557">
    <property type="entry name" value="Peptidase_M24"/>
    <property type="match status" value="1"/>
</dbReference>
<dbReference type="Pfam" id="PF16188">
    <property type="entry name" value="Peptidase_M24_C"/>
    <property type="match status" value="1"/>
</dbReference>
<dbReference type="SUPFAM" id="SSF55920">
    <property type="entry name" value="Creatinase/aminopeptidase"/>
    <property type="match status" value="1"/>
</dbReference>
<dbReference type="SUPFAM" id="SSF53092">
    <property type="entry name" value="Creatinase/prolidase N-terminal domain"/>
    <property type="match status" value="1"/>
</dbReference>
<dbReference type="PROSITE" id="PS00491">
    <property type="entry name" value="PROLINE_PEPTIDASE"/>
    <property type="match status" value="1"/>
</dbReference>
<evidence type="ECO:0000250" key="1"/>
<evidence type="ECO:0000305" key="2"/>
<feature type="chain" id="PRO_0000411802" description="Probable Xaa-Pro aminopeptidase P">
    <location>
        <begin position="1"/>
        <end position="616"/>
    </location>
</feature>
<feature type="binding site" evidence="1">
    <location>
        <position position="413"/>
    </location>
    <ligand>
        <name>Mn(2+)</name>
        <dbReference type="ChEBI" id="CHEBI:29035"/>
        <label>2</label>
    </ligand>
</feature>
<feature type="binding site" evidence="1">
    <location>
        <position position="424"/>
    </location>
    <ligand>
        <name>Mn(2+)</name>
        <dbReference type="ChEBI" id="CHEBI:29035"/>
        <label>1</label>
    </ligand>
</feature>
<feature type="binding site" evidence="1">
    <location>
        <position position="424"/>
    </location>
    <ligand>
        <name>Mn(2+)</name>
        <dbReference type="ChEBI" id="CHEBI:29035"/>
        <label>2</label>
    </ligand>
</feature>
<feature type="binding site" evidence="1">
    <location>
        <position position="522"/>
    </location>
    <ligand>
        <name>Mn(2+)</name>
        <dbReference type="ChEBI" id="CHEBI:29035"/>
        <label>1</label>
    </ligand>
</feature>
<feature type="binding site" evidence="1">
    <location>
        <position position="536"/>
    </location>
    <ligand>
        <name>Mn(2+)</name>
        <dbReference type="ChEBI" id="CHEBI:29035"/>
        <label>1</label>
    </ligand>
</feature>
<feature type="binding site" evidence="1">
    <location>
        <position position="536"/>
    </location>
    <ligand>
        <name>Mn(2+)</name>
        <dbReference type="ChEBI" id="CHEBI:29035"/>
        <label>2</label>
    </ligand>
</feature>
<proteinExistence type="inferred from homology"/>
<name>AMPP1_PARBP</name>
<gene>
    <name type="primary">AMPP</name>
    <name type="ORF">PABG_05506</name>
</gene>
<protein>
    <recommendedName>
        <fullName>Probable Xaa-Pro aminopeptidase P</fullName>
        <shortName>AMPP</shortName>
        <shortName>Aminopeptidase P</shortName>
        <ecNumber>3.4.11.9</ecNumber>
    </recommendedName>
    <alternativeName>
        <fullName>Aminoacylproline aminopeptidase</fullName>
    </alternativeName>
    <alternativeName>
        <fullName>Prolidase</fullName>
    </alternativeName>
</protein>
<keyword id="KW-0031">Aminopeptidase</keyword>
<keyword id="KW-0378">Hydrolase</keyword>
<keyword id="KW-0464">Manganese</keyword>
<keyword id="KW-0479">Metal-binding</keyword>
<keyword id="KW-0482">Metalloprotease</keyword>
<keyword id="KW-0645">Protease</keyword>
<comment type="function">
    <text evidence="1">Catalyzes the removal of a penultimate prolyl residue from the N-termini of peptides.</text>
</comment>
<comment type="catalytic activity">
    <reaction>
        <text>Release of any N-terminal amino acid, including proline, that is linked to proline, even from a dipeptide or tripeptide.</text>
        <dbReference type="EC" id="3.4.11.9"/>
    </reaction>
</comment>
<comment type="cofactor">
    <cofactor evidence="1">
        <name>Mn(2+)</name>
        <dbReference type="ChEBI" id="CHEBI:29035"/>
    </cofactor>
    <text evidence="1">Binds 2 manganese ions per subunit.</text>
</comment>
<comment type="similarity">
    <text evidence="2">Belongs to the peptidase M24B family.</text>
</comment>
<accession>C0SCV1</accession>
<sequence length="616" mass="68630">METVDTSQRLARLRELMKERNVDVYLVPSEDSHQSEYIAPCDGRREFISGFSGSAGCAIVSMTKAALSTDGRYFNQASKQLDNNWLLLKRGIESMPTWQEWTAEQLEGGKVVGVDPSLITASDARSLSETIKKSGGSLLGVQENLVDLVWGKDRPCRPSEKVTVHPVEFAGKSFEEKITDLRKELEKKKSAGFVVSMLDEVAWLFNLRGNDIPYNPVFFSYAIITPSTADLYIDEEKLSADVKKHLGDKVSLKPYTSIFEDAKALGQSAQAEVNGGASDPPRKFFISTKASWSLSLALGGANKVEEVRSPISDAKAIKNDTELEGMRACHIRDGAALTKYFAWLENELVNKKTVLNEVEASDKLEEIRSKQKNFVGLSFDTISSSGPNAAVVHYKAERKNCSIIDPEAVYLCDSGAQYLDGTTDTTRTLHFGEPTEKERKAYTLVLKGMIAIDTAIFPKGTTGFSLDTLARQFLWKEGLDYLHGTGHGVGSYLNVHEGPIGIGTRVQYSETPLSVGNVISDEPGYYEDGKFGIRIENIIMAREVKTTFSFGERPWLGFEHVTMTPLCRKLIDPSLLNDAEKKWINEYHSEVWEKTSGYFAEDELTRNWLKRETQPI</sequence>
<organism>
    <name type="scientific">Paracoccidioides brasiliensis (strain Pb03)</name>
    <dbReference type="NCBI Taxonomy" id="482561"/>
    <lineage>
        <taxon>Eukaryota</taxon>
        <taxon>Fungi</taxon>
        <taxon>Dikarya</taxon>
        <taxon>Ascomycota</taxon>
        <taxon>Pezizomycotina</taxon>
        <taxon>Eurotiomycetes</taxon>
        <taxon>Eurotiomycetidae</taxon>
        <taxon>Onygenales</taxon>
        <taxon>Ajellomycetaceae</taxon>
        <taxon>Paracoccidioides</taxon>
    </lineage>
</organism>
<reference key="1">
    <citation type="journal article" date="2011" name="PLoS Genet.">
        <title>Comparative genomic analysis of human fungal pathogens causing paracoccidioidomycosis.</title>
        <authorList>
            <person name="Desjardins C.A."/>
            <person name="Champion M.D."/>
            <person name="Holder J.W."/>
            <person name="Muszewska A."/>
            <person name="Goldberg J."/>
            <person name="Bailao A.M."/>
            <person name="Brigido M.M."/>
            <person name="Ferreira M.E."/>
            <person name="Garcia A.M."/>
            <person name="Grynberg M."/>
            <person name="Gujja S."/>
            <person name="Heiman D.I."/>
            <person name="Henn M.R."/>
            <person name="Kodira C.D."/>
            <person name="Leon-Narvaez H."/>
            <person name="Longo L.V.G."/>
            <person name="Ma L.-J."/>
            <person name="Malavazi I."/>
            <person name="Matsuo A.L."/>
            <person name="Morais F.V."/>
            <person name="Pereira M."/>
            <person name="Rodriguez-Brito S."/>
            <person name="Sakthikumar S."/>
            <person name="Salem-Izacc S.M."/>
            <person name="Sykes S.M."/>
            <person name="Teixeira M.M."/>
            <person name="Vallejo M.C."/>
            <person name="Walter M.E."/>
            <person name="Yandava C."/>
            <person name="Young S."/>
            <person name="Zeng Q."/>
            <person name="Zucker J."/>
            <person name="Felipe M.S."/>
            <person name="Goldman G.H."/>
            <person name="Haas B.J."/>
            <person name="McEwen J.G."/>
            <person name="Nino-Vega G."/>
            <person name="Puccia R."/>
            <person name="San-Blas G."/>
            <person name="Soares C.M."/>
            <person name="Birren B.W."/>
            <person name="Cuomo C.A."/>
        </authorList>
    </citation>
    <scope>NUCLEOTIDE SEQUENCE [LARGE SCALE GENOMIC DNA]</scope>
    <source>
        <strain>Pb03</strain>
    </source>
</reference>